<protein>
    <recommendedName>
        <fullName evidence="1">Putative competence-damage inducible protein</fullName>
    </recommendedName>
</protein>
<comment type="similarity">
    <text evidence="1">Belongs to the CinA family.</text>
</comment>
<dbReference type="EMBL" id="CP001186">
    <property type="protein sequence ID" value="ACK94713.1"/>
    <property type="molecule type" value="Genomic_DNA"/>
</dbReference>
<dbReference type="RefSeq" id="WP_000990683.1">
    <property type="nucleotide sequence ID" value="NC_011772.1"/>
</dbReference>
<dbReference type="SMR" id="B7ITN2"/>
<dbReference type="KEGG" id="bcg:BCG9842_B1420"/>
<dbReference type="HOGENOM" id="CLU_030805_9_3_9"/>
<dbReference type="Proteomes" id="UP000006744">
    <property type="component" value="Chromosome"/>
</dbReference>
<dbReference type="CDD" id="cd00885">
    <property type="entry name" value="cinA"/>
    <property type="match status" value="1"/>
</dbReference>
<dbReference type="Gene3D" id="3.30.70.2860">
    <property type="match status" value="1"/>
</dbReference>
<dbReference type="Gene3D" id="3.90.950.20">
    <property type="entry name" value="CinA-like"/>
    <property type="match status" value="1"/>
</dbReference>
<dbReference type="Gene3D" id="3.40.980.10">
    <property type="entry name" value="MoaB/Mog-like domain"/>
    <property type="match status" value="1"/>
</dbReference>
<dbReference type="HAMAP" id="MF_00226_B">
    <property type="entry name" value="CinA_B"/>
    <property type="match status" value="1"/>
</dbReference>
<dbReference type="InterPro" id="IPR050101">
    <property type="entry name" value="CinA"/>
</dbReference>
<dbReference type="InterPro" id="IPR036653">
    <property type="entry name" value="CinA-like_C"/>
</dbReference>
<dbReference type="InterPro" id="IPR008136">
    <property type="entry name" value="CinA_C"/>
</dbReference>
<dbReference type="InterPro" id="IPR041424">
    <property type="entry name" value="CinA_KH"/>
</dbReference>
<dbReference type="InterPro" id="IPR008135">
    <property type="entry name" value="Competence-induced_CinA"/>
</dbReference>
<dbReference type="InterPro" id="IPR036425">
    <property type="entry name" value="MoaB/Mog-like_dom_sf"/>
</dbReference>
<dbReference type="InterPro" id="IPR001453">
    <property type="entry name" value="MoaB/Mog_dom"/>
</dbReference>
<dbReference type="NCBIfam" id="TIGR00200">
    <property type="entry name" value="cinA_nterm"/>
    <property type="match status" value="1"/>
</dbReference>
<dbReference type="NCBIfam" id="TIGR00177">
    <property type="entry name" value="molyb_syn"/>
    <property type="match status" value="1"/>
</dbReference>
<dbReference type="NCBIfam" id="TIGR00199">
    <property type="entry name" value="PncC_domain"/>
    <property type="match status" value="1"/>
</dbReference>
<dbReference type="NCBIfam" id="NF001813">
    <property type="entry name" value="PRK00549.1"/>
    <property type="match status" value="1"/>
</dbReference>
<dbReference type="PANTHER" id="PTHR13939">
    <property type="entry name" value="NICOTINAMIDE-NUCLEOTIDE AMIDOHYDROLASE PNCC"/>
    <property type="match status" value="1"/>
</dbReference>
<dbReference type="PANTHER" id="PTHR13939:SF0">
    <property type="entry name" value="NMN AMIDOHYDROLASE-LIKE PROTEIN YFAY"/>
    <property type="match status" value="1"/>
</dbReference>
<dbReference type="Pfam" id="PF02464">
    <property type="entry name" value="CinA"/>
    <property type="match status" value="1"/>
</dbReference>
<dbReference type="Pfam" id="PF18146">
    <property type="entry name" value="CinA_KH"/>
    <property type="match status" value="1"/>
</dbReference>
<dbReference type="Pfam" id="PF00994">
    <property type="entry name" value="MoCF_biosynth"/>
    <property type="match status" value="1"/>
</dbReference>
<dbReference type="PIRSF" id="PIRSF006728">
    <property type="entry name" value="CinA"/>
    <property type="match status" value="1"/>
</dbReference>
<dbReference type="SMART" id="SM00852">
    <property type="entry name" value="MoCF_biosynth"/>
    <property type="match status" value="1"/>
</dbReference>
<dbReference type="SUPFAM" id="SSF142433">
    <property type="entry name" value="CinA-like"/>
    <property type="match status" value="1"/>
</dbReference>
<dbReference type="SUPFAM" id="SSF53218">
    <property type="entry name" value="Molybdenum cofactor biosynthesis proteins"/>
    <property type="match status" value="1"/>
</dbReference>
<name>CINA_BACC2</name>
<evidence type="ECO:0000255" key="1">
    <source>
        <dbReference type="HAMAP-Rule" id="MF_00226"/>
    </source>
</evidence>
<proteinExistence type="inferred from homology"/>
<sequence>MNAEIIAVGTELLLGQIANTNAQFLSEKLASIGINVYYHTVVGDNNKRLQKAIEAAEERADILIFTGGLGPTKDDLTKETIAASLDEALVYDEKALALISNYFKRTGREFTENNKKQALVLNGATVFANDHGMAPGMGVNKNGKVYILLPGPPKEMKPMYVSYVEPFLRNFTTGENIYSRVLRFFGIGESQLEVKVQDLIDGQTNPTIAPLANDGEVTLRLTAKHQNVSEAEKLIQHVEDLILERVGEFFYGYDQEFLHYKAIELLKRKGLTLACAESLTGGLFGNQVTENAGVSSVFKGGVICYHNDVKQHVLRVPEEVLHTDGAVSKECAHYLAENVKDLLKADIGISFTGVAGPDASEQKEPGTVFVGLAIKGEQTAVFPLNLSGSRQQIRERSTKYGFYHLYKKLEEI</sequence>
<feature type="chain" id="PRO_1000118914" description="Putative competence-damage inducible protein">
    <location>
        <begin position="1"/>
        <end position="412"/>
    </location>
</feature>
<organism>
    <name type="scientific">Bacillus cereus (strain G9842)</name>
    <dbReference type="NCBI Taxonomy" id="405531"/>
    <lineage>
        <taxon>Bacteria</taxon>
        <taxon>Bacillati</taxon>
        <taxon>Bacillota</taxon>
        <taxon>Bacilli</taxon>
        <taxon>Bacillales</taxon>
        <taxon>Bacillaceae</taxon>
        <taxon>Bacillus</taxon>
        <taxon>Bacillus cereus group</taxon>
    </lineage>
</organism>
<gene>
    <name evidence="1" type="primary">cinA</name>
    <name type="ordered locus">BCG9842_B1420</name>
</gene>
<reference key="1">
    <citation type="submission" date="2008-10" db="EMBL/GenBank/DDBJ databases">
        <title>Genome sequence of Bacillus cereus G9842.</title>
        <authorList>
            <person name="Dodson R.J."/>
            <person name="Durkin A.S."/>
            <person name="Rosovitz M.J."/>
            <person name="Rasko D.A."/>
            <person name="Hoffmaster A."/>
            <person name="Ravel J."/>
            <person name="Sutton G."/>
        </authorList>
    </citation>
    <scope>NUCLEOTIDE SEQUENCE [LARGE SCALE GENOMIC DNA]</scope>
    <source>
        <strain>G9842</strain>
    </source>
</reference>
<accession>B7ITN2</accession>